<organism>
    <name type="scientific">Neisseria gonorrhoeae</name>
    <dbReference type="NCBI Taxonomy" id="485"/>
    <lineage>
        <taxon>Bacteria</taxon>
        <taxon>Pseudomonadati</taxon>
        <taxon>Pseudomonadota</taxon>
        <taxon>Betaproteobacteria</taxon>
        <taxon>Neisseriales</taxon>
        <taxon>Neisseriaceae</taxon>
        <taxon>Neisseria</taxon>
    </lineage>
</organism>
<accession>O06434</accession>
<gene>
    <name type="primary">exbD</name>
</gene>
<evidence type="ECO:0000250" key="1"/>
<evidence type="ECO:0000255" key="2"/>
<evidence type="ECO:0000305" key="3"/>
<feature type="chain" id="PRO_0000129124" description="Biopolymer transport protein ExbD">
    <location>
        <begin position="1"/>
        <end position="144"/>
    </location>
</feature>
<feature type="topological domain" description="Cytoplasmic" evidence="2">
    <location>
        <begin position="1"/>
        <end position="18"/>
    </location>
</feature>
<feature type="transmembrane region" description="Helical" evidence="2">
    <location>
        <begin position="19"/>
        <end position="39"/>
    </location>
</feature>
<feature type="topological domain" description="Periplasmic" evidence="2">
    <location>
        <begin position="40"/>
        <end position="144"/>
    </location>
</feature>
<proteinExistence type="inferred from homology"/>
<protein>
    <recommendedName>
        <fullName>Biopolymer transport protein ExbD</fullName>
    </recommendedName>
</protein>
<comment type="function">
    <text evidence="1">Involved in the TonB-dependent energy-dependent transport of various receptor-bound substrates.</text>
</comment>
<comment type="subunit">
    <text evidence="1">The accessory proteins ExbB and ExbD seem to form a complex with TonB.</text>
</comment>
<comment type="subcellular location">
    <subcellularLocation>
        <location evidence="3">Cell inner membrane</location>
        <topology evidence="3">Single-pass type II membrane protein</topology>
    </subcellularLocation>
</comment>
<comment type="similarity">
    <text evidence="3">Belongs to the ExbD/TolR family.</text>
</comment>
<keyword id="KW-0997">Cell inner membrane</keyword>
<keyword id="KW-1003">Cell membrane</keyword>
<keyword id="KW-0472">Membrane</keyword>
<keyword id="KW-0653">Protein transport</keyword>
<keyword id="KW-0812">Transmembrane</keyword>
<keyword id="KW-1133">Transmembrane helix</keyword>
<keyword id="KW-0813">Transport</keyword>
<sequence>MAFGSMNSSDDSPMSDINVTPLVDVMLVLLIVFMITMPVLTHSIPLELPTASEQANKQDKQPKDPLRLTIDANGGYYVGGDSASKVEIGEVESRLKAAKEQNENVIVAIAADKAVEYDYVNKALEAARQAGITKIGFVTETKAQ</sequence>
<reference key="1">
    <citation type="journal article" date="1997" name="Mol. Microbiol.">
        <title>Cloning and functional characterization of Neisseria gonorrhoeae tonB, exbB and exbD genes.</title>
        <authorList>
            <person name="Biswas G.D."/>
            <person name="Anderson J.E."/>
            <person name="Sparling P.F."/>
        </authorList>
    </citation>
    <scope>NUCLEOTIDE SEQUENCE [GENOMIC DNA]</scope>
    <source>
        <strain>FA19</strain>
    </source>
</reference>
<dbReference type="EMBL" id="U79563">
    <property type="protein sequence ID" value="AAC45288.1"/>
    <property type="molecule type" value="Genomic_DNA"/>
</dbReference>
<dbReference type="RefSeq" id="WP_003693740.1">
    <property type="nucleotide sequence ID" value="NZ_WHPL01000002.1"/>
</dbReference>
<dbReference type="SMR" id="O06434"/>
<dbReference type="OMA" id="PMHAINV"/>
<dbReference type="GO" id="GO:0005886">
    <property type="term" value="C:plasma membrane"/>
    <property type="evidence" value="ECO:0007669"/>
    <property type="project" value="UniProtKB-SubCell"/>
</dbReference>
<dbReference type="GO" id="GO:0022857">
    <property type="term" value="F:transmembrane transporter activity"/>
    <property type="evidence" value="ECO:0007669"/>
    <property type="project" value="InterPro"/>
</dbReference>
<dbReference type="GO" id="GO:0015031">
    <property type="term" value="P:protein transport"/>
    <property type="evidence" value="ECO:0007669"/>
    <property type="project" value="UniProtKB-KW"/>
</dbReference>
<dbReference type="Gene3D" id="3.30.420.270">
    <property type="match status" value="1"/>
</dbReference>
<dbReference type="InterPro" id="IPR003400">
    <property type="entry name" value="ExbD"/>
</dbReference>
<dbReference type="PANTHER" id="PTHR30558:SF12">
    <property type="entry name" value="BIOPOLYMER TRANSPORT PROTEIN EXBD"/>
    <property type="match status" value="1"/>
</dbReference>
<dbReference type="PANTHER" id="PTHR30558">
    <property type="entry name" value="EXBD MEMBRANE COMPONENT OF PMF-DRIVEN MACROMOLECULE IMPORT SYSTEM"/>
    <property type="match status" value="1"/>
</dbReference>
<dbReference type="Pfam" id="PF02472">
    <property type="entry name" value="ExbD"/>
    <property type="match status" value="1"/>
</dbReference>
<name>EXBD_NEIGO</name>